<accession>P39975</accession>
<accession>D3DLH9</accession>
<accession>Q6B1N5</accession>
<dbReference type="EMBL" id="U18795">
    <property type="protein sequence ID" value="AAB65015.1"/>
    <property type="molecule type" value="Genomic_DNA"/>
</dbReference>
<dbReference type="EMBL" id="AY693045">
    <property type="protein sequence ID" value="AAT93064.1"/>
    <property type="molecule type" value="Genomic_DNA"/>
</dbReference>
<dbReference type="EMBL" id="BK006939">
    <property type="protein sequence ID" value="DAA07583.1"/>
    <property type="molecule type" value="Genomic_DNA"/>
</dbReference>
<dbReference type="PIR" id="S50517">
    <property type="entry name" value="S50517"/>
</dbReference>
<dbReference type="RefSeq" id="NP_010842.1">
    <property type="nucleotide sequence ID" value="NM_001178887.1"/>
</dbReference>
<dbReference type="BioGRID" id="36659">
    <property type="interactions" value="28"/>
</dbReference>
<dbReference type="DIP" id="DIP-4097N"/>
<dbReference type="FunCoup" id="P39975">
    <property type="interactions" value="37"/>
</dbReference>
<dbReference type="IntAct" id="P39975">
    <property type="interactions" value="1"/>
</dbReference>
<dbReference type="STRING" id="4932.YEL072W"/>
<dbReference type="iPTMnet" id="P39975"/>
<dbReference type="PaxDb" id="4932-YEL072W"/>
<dbReference type="EnsemblFungi" id="YEL072W_mRNA">
    <property type="protein sequence ID" value="YEL072W"/>
    <property type="gene ID" value="YEL072W"/>
</dbReference>
<dbReference type="GeneID" id="856637"/>
<dbReference type="KEGG" id="sce:YEL072W"/>
<dbReference type="AGR" id="SGD:S000000798"/>
<dbReference type="SGD" id="S000000798">
    <property type="gene designation" value="RMD6"/>
</dbReference>
<dbReference type="VEuPathDB" id="FungiDB:YEL072W"/>
<dbReference type="eggNOG" id="ENOG502S44U">
    <property type="taxonomic scope" value="Eukaryota"/>
</dbReference>
<dbReference type="HOGENOM" id="CLU_107283_0_0_1"/>
<dbReference type="InParanoid" id="P39975"/>
<dbReference type="OMA" id="CHERAFF"/>
<dbReference type="OrthoDB" id="4062597at2759"/>
<dbReference type="BioCyc" id="YEAST:G3O-30186-MONOMER"/>
<dbReference type="BioGRID-ORCS" id="856637">
    <property type="hits" value="0 hits in 10 CRISPR screens"/>
</dbReference>
<dbReference type="PRO" id="PR:P39975"/>
<dbReference type="Proteomes" id="UP000002311">
    <property type="component" value="Chromosome V"/>
</dbReference>
<dbReference type="RNAct" id="P39975">
    <property type="molecule type" value="protein"/>
</dbReference>
<dbReference type="GO" id="GO:0005777">
    <property type="term" value="C:peroxisome"/>
    <property type="evidence" value="ECO:0000314"/>
    <property type="project" value="SGD"/>
</dbReference>
<dbReference type="GO" id="GO:0051321">
    <property type="term" value="P:meiotic cell cycle"/>
    <property type="evidence" value="ECO:0007669"/>
    <property type="project" value="UniProtKB-KW"/>
</dbReference>
<dbReference type="GO" id="GO:0030435">
    <property type="term" value="P:sporulation resulting in formation of a cellular spore"/>
    <property type="evidence" value="ECO:0007669"/>
    <property type="project" value="UniProtKB-KW"/>
</dbReference>
<reference key="1">
    <citation type="journal article" date="1997" name="Nature">
        <title>The nucleotide sequence of Saccharomyces cerevisiae chromosome V.</title>
        <authorList>
            <person name="Dietrich F.S."/>
            <person name="Mulligan J.T."/>
            <person name="Hennessy K.M."/>
            <person name="Yelton M.A."/>
            <person name="Allen E."/>
            <person name="Araujo R."/>
            <person name="Aviles E."/>
            <person name="Berno A."/>
            <person name="Brennan T."/>
            <person name="Carpenter J."/>
            <person name="Chen E."/>
            <person name="Cherry J.M."/>
            <person name="Chung E."/>
            <person name="Duncan M."/>
            <person name="Guzman E."/>
            <person name="Hartzell G."/>
            <person name="Hunicke-Smith S."/>
            <person name="Hyman R.W."/>
            <person name="Kayser A."/>
            <person name="Komp C."/>
            <person name="Lashkari D."/>
            <person name="Lew H."/>
            <person name="Lin D."/>
            <person name="Mosedale D."/>
            <person name="Nakahara K."/>
            <person name="Namath A."/>
            <person name="Norgren R."/>
            <person name="Oefner P."/>
            <person name="Oh C."/>
            <person name="Petel F.X."/>
            <person name="Roberts D."/>
            <person name="Sehl P."/>
            <person name="Schramm S."/>
            <person name="Shogren T."/>
            <person name="Smith V."/>
            <person name="Taylor P."/>
            <person name="Wei Y."/>
            <person name="Botstein D."/>
            <person name="Davis R.W."/>
        </authorList>
    </citation>
    <scope>NUCLEOTIDE SEQUENCE [LARGE SCALE GENOMIC DNA]</scope>
    <source>
        <strain>ATCC 204508 / S288c</strain>
    </source>
</reference>
<reference key="2">
    <citation type="journal article" date="2014" name="G3 (Bethesda)">
        <title>The reference genome sequence of Saccharomyces cerevisiae: Then and now.</title>
        <authorList>
            <person name="Engel S.R."/>
            <person name="Dietrich F.S."/>
            <person name="Fisk D.G."/>
            <person name="Binkley G."/>
            <person name="Balakrishnan R."/>
            <person name="Costanzo M.C."/>
            <person name="Dwight S.S."/>
            <person name="Hitz B.C."/>
            <person name="Karra K."/>
            <person name="Nash R.S."/>
            <person name="Weng S."/>
            <person name="Wong E.D."/>
            <person name="Lloyd P."/>
            <person name="Skrzypek M.S."/>
            <person name="Miyasato S.R."/>
            <person name="Simison M."/>
            <person name="Cherry J.M."/>
        </authorList>
    </citation>
    <scope>GENOME REANNOTATION</scope>
    <source>
        <strain>ATCC 204508 / S288c</strain>
    </source>
</reference>
<reference key="3">
    <citation type="journal article" date="2007" name="Genome Res.">
        <title>Approaching a complete repository of sequence-verified protein-encoding clones for Saccharomyces cerevisiae.</title>
        <authorList>
            <person name="Hu Y."/>
            <person name="Rolfs A."/>
            <person name="Bhullar B."/>
            <person name="Murthy T.V.S."/>
            <person name="Zhu C."/>
            <person name="Berger M.F."/>
            <person name="Camargo A.A."/>
            <person name="Kelley F."/>
            <person name="McCarron S."/>
            <person name="Jepson D."/>
            <person name="Richardson A."/>
            <person name="Raphael J."/>
            <person name="Moreira D."/>
            <person name="Taycher E."/>
            <person name="Zuo D."/>
            <person name="Mohr S."/>
            <person name="Kane M.F."/>
            <person name="Williamson J."/>
            <person name="Simpson A.J.G."/>
            <person name="Bulyk M.L."/>
            <person name="Harlow E."/>
            <person name="Marsischky G."/>
            <person name="Kolodner R.D."/>
            <person name="LaBaer J."/>
        </authorList>
    </citation>
    <scope>NUCLEOTIDE SEQUENCE [GENOMIC DNA]</scope>
    <source>
        <strain>ATCC 204508 / S288c</strain>
    </source>
</reference>
<reference key="4">
    <citation type="journal article" date="2003" name="Genetics">
        <title>Large-scale functional genomic analysis of sporulation and meiosis in Saccharomyces cerevisiae.</title>
        <authorList>
            <person name="Enyenihi A.H."/>
            <person name="Saunders W.S."/>
        </authorList>
    </citation>
    <scope>FUNCTION</scope>
</reference>
<reference key="5">
    <citation type="journal article" date="2022" name="Cells">
        <title>Pls1 Is a Peroxisomal Matrix Protein with a Role in Regulating Lysine Biosynthesis.</title>
        <authorList>
            <person name="David Y."/>
            <person name="Castro I.G."/>
            <person name="Yifrach E."/>
            <person name="Bibi C."/>
            <person name="Katawi E."/>
            <person name="Yahav Har-Shai D."/>
            <person name="Brodsky S."/>
            <person name="Barkai N."/>
            <person name="Ravid T."/>
            <person name="Eisenstein M."/>
            <person name="Pietrokovski S."/>
            <person name="Schuldiner M."/>
            <person name="Zalckvar E."/>
        </authorList>
    </citation>
    <scope>SUBCELLULAR LOCATION</scope>
</reference>
<organism>
    <name type="scientific">Saccharomyces cerevisiae (strain ATCC 204508 / S288c)</name>
    <name type="common">Baker's yeast</name>
    <dbReference type="NCBI Taxonomy" id="559292"/>
    <lineage>
        <taxon>Eukaryota</taxon>
        <taxon>Fungi</taxon>
        <taxon>Dikarya</taxon>
        <taxon>Ascomycota</taxon>
        <taxon>Saccharomycotina</taxon>
        <taxon>Saccharomycetes</taxon>
        <taxon>Saccharomycetales</taxon>
        <taxon>Saccharomycetaceae</taxon>
        <taxon>Saccharomyces</taxon>
    </lineage>
</organism>
<name>RMD6_YEAST</name>
<evidence type="ECO:0000269" key="1">
    <source>
    </source>
</evidence>
<evidence type="ECO:0000269" key="2">
    <source>
    </source>
</evidence>
<evidence type="ECO:0000305" key="3"/>
<sequence>MSACPCNIVILPVEILKNSSKDTKYSLYTTINRGYDVPRLKYGIIVSPRVHSLETLFSDLGFDKNIEKSSLYLLLNDPTLAYPNFHEHFEQLKGETNKDLSLPTYYIPKVQFLTEAFDSEHTLATIGYKPNNKESYEITGFTSMGNGYGIKLFNYSVIHMMRSHKCKRVVADIIMEHDLLGYYEKKLGFVEVQRFKVLKEQHQVKVFDDKVDFTKDFHVIKMIKELGNHRL</sequence>
<proteinExistence type="predicted"/>
<comment type="function">
    <text evidence="1">Required for sporulation. Required for meiotic nuclear division.</text>
</comment>
<comment type="subcellular location">
    <subcellularLocation>
        <location evidence="2">Peroxisome</location>
    </subcellularLocation>
</comment>
<protein>
    <recommendedName>
        <fullName>Sporulation protein RMD6</fullName>
    </recommendedName>
    <alternativeName>
        <fullName>Required for meiotic nuclear division protein 6</fullName>
    </alternativeName>
</protein>
<feature type="chain" id="PRO_0000202600" description="Sporulation protein RMD6">
    <location>
        <begin position="1"/>
        <end position="231"/>
    </location>
</feature>
<feature type="sequence conflict" description="In Ref. 3; AAT93064." evidence="3" ref="3">
    <original>Y</original>
    <variation>D</variation>
    <location>
        <position position="28"/>
    </location>
</feature>
<keyword id="KW-0469">Meiosis</keyword>
<keyword id="KW-0576">Peroxisome</keyword>
<keyword id="KW-1185">Reference proteome</keyword>
<keyword id="KW-0749">Sporulation</keyword>
<gene>
    <name type="primary">RMD6</name>
    <name type="ordered locus">YEL072W</name>
</gene>